<keyword id="KW-0067">ATP-binding</keyword>
<keyword id="KW-0547">Nucleotide-binding</keyword>
<keyword id="KW-1185">Reference proteome</keyword>
<gene>
    <name type="ordered locus">Ta0179</name>
</gene>
<evidence type="ECO:0000250" key="1"/>
<evidence type="ECO:0000305" key="2"/>
<comment type="similarity">
    <text evidence="2">Belongs to the UPF0200 family.</text>
</comment>
<comment type="sequence caution" evidence="2">
    <conflict type="erroneous initiation">
        <sequence resource="EMBL-CDS" id="CAC11325"/>
    </conflict>
</comment>
<sequence length="181" mass="20801">MIVVTGMPGAGKDEFVKVARSLGFIDLHMGNTVREFAKNAGIPEIDHEIGNFATSERKKYGMDIWAVRTAQKITDDGRTVIDGLRNYEELQYFSKFSENPYVVAIFASRKDRFSRILKRDRPDDIRTMEELIERDTRELSWGIGNVIALADYMIVNDDTLETFHARCRKLLTEKFSISNKI</sequence>
<reference key="1">
    <citation type="journal article" date="2000" name="Nature">
        <title>The genome sequence of the thermoacidophilic scavenger Thermoplasma acidophilum.</title>
        <authorList>
            <person name="Ruepp A."/>
            <person name="Graml W."/>
            <person name="Santos-Martinez M.-L."/>
            <person name="Koretke K.K."/>
            <person name="Volker C."/>
            <person name="Mewes H.-W."/>
            <person name="Frishman D."/>
            <person name="Stocker S."/>
            <person name="Lupas A.N."/>
            <person name="Baumeister W."/>
        </authorList>
    </citation>
    <scope>NUCLEOTIDE SEQUENCE [LARGE SCALE GENOMIC DNA]</scope>
    <source>
        <strain>ATCC 25905 / DSM 1728 / JCM 9062 / NBRC 15155 / AMRC-C165</strain>
    </source>
</reference>
<name>Y179_THEAC</name>
<organism>
    <name type="scientific">Thermoplasma acidophilum (strain ATCC 25905 / DSM 1728 / JCM 9062 / NBRC 15155 / AMRC-C165)</name>
    <dbReference type="NCBI Taxonomy" id="273075"/>
    <lineage>
        <taxon>Archaea</taxon>
        <taxon>Methanobacteriati</taxon>
        <taxon>Thermoplasmatota</taxon>
        <taxon>Thermoplasmata</taxon>
        <taxon>Thermoplasmatales</taxon>
        <taxon>Thermoplasmataceae</taxon>
        <taxon>Thermoplasma</taxon>
    </lineage>
</organism>
<protein>
    <recommendedName>
        <fullName>UPF0200 protein Ta0179</fullName>
    </recommendedName>
</protein>
<accession>Q9HLP8</accession>
<proteinExistence type="inferred from homology"/>
<feature type="chain" id="PRO_0000094536" description="UPF0200 protein Ta0179">
    <location>
        <begin position="1"/>
        <end position="181"/>
    </location>
</feature>
<feature type="binding site" evidence="1">
    <location>
        <begin position="6"/>
        <end position="13"/>
    </location>
    <ligand>
        <name>ATP</name>
        <dbReference type="ChEBI" id="CHEBI:30616"/>
    </ligand>
</feature>
<dbReference type="EMBL" id="AL445063">
    <property type="protein sequence ID" value="CAC11325.1"/>
    <property type="status" value="ALT_INIT"/>
    <property type="molecule type" value="Genomic_DNA"/>
</dbReference>
<dbReference type="RefSeq" id="WP_048162231.1">
    <property type="nucleotide sequence ID" value="NC_002578.1"/>
</dbReference>
<dbReference type="SMR" id="Q9HLP8"/>
<dbReference type="FunCoup" id="Q9HLP8">
    <property type="interactions" value="10"/>
</dbReference>
<dbReference type="STRING" id="273075.gene:9571393"/>
<dbReference type="PaxDb" id="273075-Ta0179"/>
<dbReference type="EnsemblBacteria" id="CAC11325">
    <property type="protein sequence ID" value="CAC11325"/>
    <property type="gene ID" value="CAC11325"/>
</dbReference>
<dbReference type="KEGG" id="tac:Ta0179"/>
<dbReference type="eggNOG" id="arCOG01045">
    <property type="taxonomic scope" value="Archaea"/>
</dbReference>
<dbReference type="HOGENOM" id="CLU_096329_1_0_2"/>
<dbReference type="InParanoid" id="Q9HLP8"/>
<dbReference type="OrthoDB" id="85381at2157"/>
<dbReference type="Proteomes" id="UP000001024">
    <property type="component" value="Chromosome"/>
</dbReference>
<dbReference type="GO" id="GO:0005524">
    <property type="term" value="F:ATP binding"/>
    <property type="evidence" value="ECO:0007669"/>
    <property type="project" value="UniProtKB-UniRule"/>
</dbReference>
<dbReference type="Gene3D" id="3.40.50.300">
    <property type="entry name" value="P-loop containing nucleotide triphosphate hydrolases"/>
    <property type="match status" value="1"/>
</dbReference>
<dbReference type="HAMAP" id="MF_01111">
    <property type="entry name" value="UPF0200"/>
    <property type="match status" value="1"/>
</dbReference>
<dbReference type="InterPro" id="IPR022970">
    <property type="entry name" value="NTP_hydrolase-rel"/>
</dbReference>
<dbReference type="InterPro" id="IPR027417">
    <property type="entry name" value="P-loop_NTPase"/>
</dbReference>
<dbReference type="PANTHER" id="PTHR41930:SF1">
    <property type="entry name" value="DEPHOSPHO-COA KINASE"/>
    <property type="match status" value="1"/>
</dbReference>
<dbReference type="PANTHER" id="PTHR41930">
    <property type="entry name" value="UPF0200 PROTEIN MJ1399"/>
    <property type="match status" value="1"/>
</dbReference>
<dbReference type="Pfam" id="PF13207">
    <property type="entry name" value="AAA_17"/>
    <property type="match status" value="1"/>
</dbReference>
<dbReference type="SUPFAM" id="SSF52540">
    <property type="entry name" value="P-loop containing nucleoside triphosphate hydrolases"/>
    <property type="match status" value="1"/>
</dbReference>